<name>SEH1_HUMAN</name>
<proteinExistence type="evidence at protein level"/>
<organism>
    <name type="scientific">Homo sapiens</name>
    <name type="common">Human</name>
    <dbReference type="NCBI Taxonomy" id="9606"/>
    <lineage>
        <taxon>Eukaryota</taxon>
        <taxon>Metazoa</taxon>
        <taxon>Chordata</taxon>
        <taxon>Craniata</taxon>
        <taxon>Vertebrata</taxon>
        <taxon>Euteleostomi</taxon>
        <taxon>Mammalia</taxon>
        <taxon>Eutheria</taxon>
        <taxon>Euarchontoglires</taxon>
        <taxon>Primates</taxon>
        <taxon>Haplorrhini</taxon>
        <taxon>Catarrhini</taxon>
        <taxon>Hominidae</taxon>
        <taxon>Homo</taxon>
    </lineage>
</organism>
<comment type="function">
    <text evidence="3 5">Component of the Nup107-160 subcomplex of the nuclear pore complex (NPC). The Nup107-160 subcomplex is required for the assembly of a functional NPC (PubMed:15146057, PubMed:17363900). The Nup107-160 subcomplex is also required for normal kinetochore microtubule attachment, mitotic progression and chromosome segregation. This subunit plays a role in recruitment of the Nup107-160 subcomplex to the kinetochore (PubMed:15146057, PubMed:17363900).</text>
</comment>
<comment type="function">
    <text evidence="6 8 9 10 12 13">As a component of the GATOR2 complex, functions as an activator of the amino acid-sensing branch of the mTORC1 signaling pathway (PubMed:23723238, PubMed:25457612, PubMed:27487210, PubMed:35831510, PubMed:36528027). The GATOR2 complex indirectly activates mTORC1 through the inhibition of the GATOR1 subcomplex (PubMed:23723238, PubMed:27487210, PubMed:35831510, PubMed:36528027). GATOR2 probably acts as an E3 ubiquitin-protein ligase toward GATOR1 (PubMed:36528027). In the presence of abundant amino acids, the GATOR2 complex mediates ubiquitination of the NPRL2 core component of the GATOR1 complex, leading to GATOR1 inactivation (PubMed:36528027). In the absence of amino acids, GATOR2 is inhibited, activating the GATOR1 complex (PubMed:25457612, PubMed:26972053, PubMed:27487210). Within the GATOR2 complex, SEC13 and SEH1L are required to stabilize the complex (PubMed:35831510).</text>
</comment>
<comment type="activity regulation">
    <text evidence="8 9 10 12">The GATOR2 complex is negatively regulated by the upstream amino acid sensors CASTOR1 and SESN2, which sequester the GATOR2 complex in absence of amino acids (PubMed:25457612, PubMed:26972053, PubMed:27487210, PubMed:35831510). In the presence of abundant amino acids, GATOR2 is released from CASTOR1 and SESN2 and activated (PubMed:25457612, PubMed:26972053, PubMed:27487210, PubMed:35831510).</text>
</comment>
<comment type="subunit">
    <text evidence="4 6 7 8 9 12 13">Component of the Nup107-160 subcomplex of the nuclear pore complex (NPC) (PubMed:17360435). The Nup107-160 subcomplex includes NUP160, NUP133, NUP107, NUP98, NUP85, NUP43, NUP37, SEH1 and SEC13 (PubMed:17360435). The SEH1 subunit appears to be only weakly associated with the Nup107-160 subcomplex (PubMed:17360435). Component of the GATOR2 subcomplex, composed of MIOS, SEC13, SEH1L, WDR24 and WDR59 (PubMed:23723238). The GATOR2 complex interacts with CASTOR1 and CASTOR2; the interaction is negatively regulated by arginine (PubMed:26972053, PubMed:35831510, PubMed:36528027). The GATOR2 complex interacts with SESN1, SESN2 and SESN3; the interaction is negatively regulated by amino acids (PubMed:25263562, PubMed:25457612). SESN1, SESN2 and SESN3 convey leucine availability via direct interaction with SEH1L and WDR24 (PubMed:35831510).</text>
</comment>
<comment type="interaction">
    <interactant intactId="EBI-922818">
        <id>Q96EE3</id>
    </interactant>
    <interactant intactId="EBI-716392">
        <id>Q9BW27</id>
        <label>NUP85</label>
    </interactant>
    <organismsDiffer>false</organismsDiffer>
    <experiments>3</experiments>
</comment>
<comment type="interaction">
    <interactant intactId="EBI-922818">
        <id>Q96EE3</id>
    </interactant>
    <interactant intactId="EBI-1046596">
        <id>P55735</id>
        <label>SEC13</label>
    </interactant>
    <organismsDiffer>false</organismsDiffer>
    <experiments>8</experiments>
</comment>
<comment type="subcellular location">
    <subcellularLocation>
        <location evidence="3 5">Chromosome</location>
        <location evidence="3 5">Centromere</location>
        <location evidence="3 5">Kinetochore</location>
    </subcellularLocation>
    <subcellularLocation>
        <location evidence="3 5">Nucleus</location>
        <location evidence="3 5">Nuclear pore complex</location>
    </subcellularLocation>
    <subcellularLocation>
        <location evidence="11">Lysosome membrane</location>
    </subcellularLocation>
</comment>
<comment type="alternative products">
    <event type="alternative splicing"/>
    <isoform>
        <id>Q96EE3-2</id>
        <name>A</name>
        <name>SEH1A</name>
        <sequence type="displayed"/>
    </isoform>
    <isoform>
        <id>Q96EE3-1</id>
        <name>B</name>
        <name>SEH1B</name>
        <sequence type="described" ref="VSP_037954"/>
    </isoform>
</comment>
<comment type="similarity">
    <text evidence="17">Belongs to the WD repeat SEC13 family.</text>
</comment>
<comment type="caution">
    <text evidence="12 13">The E3 ubiquitin-protein ligase activity of the GATOR2 complex is subject to discussion (PubMed:35831510, PubMed:36528027). According to a report, the GATOR2 complex does not catalyze ubiquitination of the GATOR1 complex (PubMed:35831510). In contrast, another publication showed that the GATOR2 complex mediates ubiquitination of the NPRL2 core component of the GATOR1 complex, leading to GATOR1 inactivation (PubMed:36528027).</text>
</comment>
<dbReference type="EMBL" id="AF255625">
    <property type="protein sequence ID" value="AAM21169.1"/>
    <property type="molecule type" value="mRNA"/>
</dbReference>
<dbReference type="EMBL" id="AF431970">
    <property type="protein sequence ID" value="AAM44214.1"/>
    <property type="molecule type" value="mRNA"/>
</dbReference>
<dbReference type="EMBL" id="AF514996">
    <property type="protein sequence ID" value="AAM76707.1"/>
    <property type="molecule type" value="mRNA"/>
</dbReference>
<dbReference type="EMBL" id="AF136976">
    <property type="protein sequence ID" value="AAG49437.1"/>
    <property type="molecule type" value="mRNA"/>
</dbReference>
<dbReference type="EMBL" id="AK056940">
    <property type="protein sequence ID" value="BAB71317.1"/>
    <property type="molecule type" value="mRNA"/>
</dbReference>
<dbReference type="EMBL" id="AK291226">
    <property type="protein sequence ID" value="BAF83915.1"/>
    <property type="molecule type" value="mRNA"/>
</dbReference>
<dbReference type="EMBL" id="BC012430">
    <property type="protein sequence ID" value="AAH12430.1"/>
    <property type="molecule type" value="mRNA"/>
</dbReference>
<dbReference type="CCDS" id="CCDS32791.1">
    <molecule id="Q96EE3-1"/>
</dbReference>
<dbReference type="CCDS" id="CCDS45832.1">
    <molecule id="Q96EE3-2"/>
</dbReference>
<dbReference type="RefSeq" id="NP_001013455.1">
    <molecule id="Q96EE3-1"/>
    <property type="nucleotide sequence ID" value="NM_001013437.2"/>
</dbReference>
<dbReference type="RefSeq" id="NP_112493.2">
    <molecule id="Q96EE3-2"/>
    <property type="nucleotide sequence ID" value="NM_031216.4"/>
</dbReference>
<dbReference type="PDB" id="5A9Q">
    <property type="method" value="EM"/>
    <property type="resolution" value="23.00 A"/>
    <property type="chains" value="7/G/P/Y=1-360"/>
</dbReference>
<dbReference type="PDB" id="7PEQ">
    <property type="method" value="EM"/>
    <property type="resolution" value="35.00 A"/>
    <property type="chains" value="AG/BG/CG/DG=1-360"/>
</dbReference>
<dbReference type="PDB" id="7R5J">
    <property type="method" value="EM"/>
    <property type="resolution" value="50.00 A"/>
    <property type="chains" value="O0/O1/O2/O3=1-360"/>
</dbReference>
<dbReference type="PDB" id="7R5K">
    <property type="method" value="EM"/>
    <property type="resolution" value="12.00 A"/>
    <property type="chains" value="O0/O1/O2/O3=1-360"/>
</dbReference>
<dbReference type="PDB" id="7UHY">
    <property type="method" value="EM"/>
    <property type="resolution" value="3.66 A"/>
    <property type="chains" value="E/F/G=1-357"/>
</dbReference>
<dbReference type="PDBsum" id="5A9Q"/>
<dbReference type="PDBsum" id="7PEQ"/>
<dbReference type="PDBsum" id="7R5J"/>
<dbReference type="PDBsum" id="7R5K"/>
<dbReference type="PDBsum" id="7UHY"/>
<dbReference type="EMDB" id="EMD-14321"/>
<dbReference type="EMDB" id="EMD-14322"/>
<dbReference type="EMDB" id="EMD-26519"/>
<dbReference type="SMR" id="Q96EE3"/>
<dbReference type="BioGRID" id="123629">
    <property type="interactions" value="168"/>
</dbReference>
<dbReference type="ComplexPortal" id="CPX-6227">
    <property type="entry name" value="GATOR2 complex"/>
</dbReference>
<dbReference type="ComplexPortal" id="CPX-873">
    <property type="entry name" value="Nuclear pore complex"/>
</dbReference>
<dbReference type="CORUM" id="Q96EE3"/>
<dbReference type="FunCoup" id="Q96EE3">
    <property type="interactions" value="3182"/>
</dbReference>
<dbReference type="IntAct" id="Q96EE3">
    <property type="interactions" value="86"/>
</dbReference>
<dbReference type="MINT" id="Q96EE3"/>
<dbReference type="STRING" id="9606.ENSP00000382779"/>
<dbReference type="TCDB" id="1.I.1.1.3">
    <property type="family name" value="the nuclear pore complex (npc) family"/>
</dbReference>
<dbReference type="GlyGen" id="Q96EE3">
    <property type="glycosylation" value="1 site, 1 O-linked glycan (1 site)"/>
</dbReference>
<dbReference type="iPTMnet" id="Q96EE3"/>
<dbReference type="PhosphoSitePlus" id="Q96EE3"/>
<dbReference type="SwissPalm" id="Q96EE3"/>
<dbReference type="BioMuta" id="SEH1L"/>
<dbReference type="DMDM" id="257051064"/>
<dbReference type="jPOST" id="Q96EE3"/>
<dbReference type="MassIVE" id="Q96EE3"/>
<dbReference type="PaxDb" id="9606-ENSP00000382779"/>
<dbReference type="PeptideAtlas" id="Q96EE3"/>
<dbReference type="ProteomicsDB" id="76398">
    <molecule id="Q96EE3-2"/>
</dbReference>
<dbReference type="ProteomicsDB" id="76399">
    <molecule id="Q96EE3-1"/>
</dbReference>
<dbReference type="Pumba" id="Q96EE3"/>
<dbReference type="Antibodypedia" id="48526">
    <property type="antibodies" value="17 antibodies from 12 providers"/>
</dbReference>
<dbReference type="DNASU" id="81929"/>
<dbReference type="Ensembl" id="ENST00000262124.15">
    <molecule id="Q96EE3-2"/>
    <property type="protein sequence ID" value="ENSP00000262124.10"/>
    <property type="gene ID" value="ENSG00000085415.16"/>
</dbReference>
<dbReference type="Ensembl" id="ENST00000399892.7">
    <molecule id="Q96EE3-1"/>
    <property type="protein sequence ID" value="ENSP00000382779.1"/>
    <property type="gene ID" value="ENSG00000085415.16"/>
</dbReference>
<dbReference type="GeneID" id="81929"/>
<dbReference type="KEGG" id="hsa:81929"/>
<dbReference type="MANE-Select" id="ENST00000399892.7">
    <molecule id="Q96EE3-1"/>
    <property type="protein sequence ID" value="ENSP00000382779.1"/>
    <property type="RefSeq nucleotide sequence ID" value="NM_001013437.2"/>
    <property type="RefSeq protein sequence ID" value="NP_001013455.1"/>
</dbReference>
<dbReference type="UCSC" id="uc002krq.5">
    <molecule id="Q96EE3-2"/>
    <property type="organism name" value="human"/>
</dbReference>
<dbReference type="AGR" id="HGNC:30379"/>
<dbReference type="CTD" id="81929"/>
<dbReference type="DisGeNET" id="81929"/>
<dbReference type="GeneCards" id="SEH1L"/>
<dbReference type="HGNC" id="HGNC:30379">
    <property type="gene designation" value="SEH1L"/>
</dbReference>
<dbReference type="HPA" id="ENSG00000085415">
    <property type="expression patterns" value="Low tissue specificity"/>
</dbReference>
<dbReference type="MIM" id="609263">
    <property type="type" value="gene"/>
</dbReference>
<dbReference type="neXtProt" id="NX_Q96EE3"/>
<dbReference type="OpenTargets" id="ENSG00000085415"/>
<dbReference type="PharmGKB" id="PA134912135"/>
<dbReference type="VEuPathDB" id="HostDB:ENSG00000085415"/>
<dbReference type="eggNOG" id="KOG2445">
    <property type="taxonomic scope" value="Eukaryota"/>
</dbReference>
<dbReference type="GeneTree" id="ENSGT00940000153393"/>
<dbReference type="HOGENOM" id="CLU_032441_1_2_1"/>
<dbReference type="InParanoid" id="Q96EE3"/>
<dbReference type="OMA" id="NAPTRRW"/>
<dbReference type="OrthoDB" id="364224at2759"/>
<dbReference type="PAN-GO" id="Q96EE3">
    <property type="GO annotations" value="4 GO annotations based on evolutionary models"/>
</dbReference>
<dbReference type="PhylomeDB" id="Q96EE3"/>
<dbReference type="TreeFam" id="TF105924"/>
<dbReference type="PathwayCommons" id="Q96EE3"/>
<dbReference type="Reactome" id="R-HSA-1169408">
    <property type="pathway name" value="ISG15 antiviral mechanism"/>
</dbReference>
<dbReference type="Reactome" id="R-HSA-141444">
    <molecule id="Q96EE3-1"/>
    <property type="pathway name" value="Amplification of signal from unattached kinetochores via a MAD2 inhibitory signal"/>
</dbReference>
<dbReference type="Reactome" id="R-HSA-159227">
    <property type="pathway name" value="Transport of the SLBP independent Mature mRNA"/>
</dbReference>
<dbReference type="Reactome" id="R-HSA-159230">
    <property type="pathway name" value="Transport of the SLBP Dependant Mature mRNA"/>
</dbReference>
<dbReference type="Reactome" id="R-HSA-159231">
    <property type="pathway name" value="Transport of Mature mRNA Derived from an Intronless Transcript"/>
</dbReference>
<dbReference type="Reactome" id="R-HSA-159236">
    <property type="pathway name" value="Transport of Mature mRNA derived from an Intron-Containing Transcript"/>
</dbReference>
<dbReference type="Reactome" id="R-HSA-165054">
    <property type="pathway name" value="Rev-mediated nuclear export of HIV RNA"/>
</dbReference>
<dbReference type="Reactome" id="R-HSA-168271">
    <property type="pathway name" value="Transport of Ribonucleoproteins into the Host Nucleus"/>
</dbReference>
<dbReference type="Reactome" id="R-HSA-168276">
    <property type="pathway name" value="NS1 Mediated Effects on Host Pathways"/>
</dbReference>
<dbReference type="Reactome" id="R-HSA-168325">
    <property type="pathway name" value="Viral Messenger RNA Synthesis"/>
</dbReference>
<dbReference type="Reactome" id="R-HSA-168333">
    <property type="pathway name" value="NEP/NS2 Interacts with the Cellular Export Machinery"/>
</dbReference>
<dbReference type="Reactome" id="R-HSA-170822">
    <property type="pathway name" value="Regulation of Glucokinase by Glucokinase Regulatory Protein"/>
</dbReference>
<dbReference type="Reactome" id="R-HSA-180746">
    <property type="pathway name" value="Nuclear import of Rev protein"/>
</dbReference>
<dbReference type="Reactome" id="R-HSA-180910">
    <property type="pathway name" value="Vpr-mediated nuclear import of PICs"/>
</dbReference>
<dbReference type="Reactome" id="R-HSA-191859">
    <property type="pathway name" value="snRNP Assembly"/>
</dbReference>
<dbReference type="Reactome" id="R-HSA-2467813">
    <molecule id="Q96EE3-1"/>
    <property type="pathway name" value="Separation of Sister Chromatids"/>
</dbReference>
<dbReference type="Reactome" id="R-HSA-2500257">
    <molecule id="Q96EE3-1"/>
    <property type="pathway name" value="Resolution of Sister Chromatid Cohesion"/>
</dbReference>
<dbReference type="Reactome" id="R-HSA-3108214">
    <property type="pathway name" value="SUMOylation of DNA damage response and repair proteins"/>
</dbReference>
<dbReference type="Reactome" id="R-HSA-3232142">
    <property type="pathway name" value="SUMOylation of ubiquitinylation proteins"/>
</dbReference>
<dbReference type="Reactome" id="R-HSA-3301854">
    <property type="pathway name" value="Nuclear Pore Complex (NPC) Disassembly"/>
</dbReference>
<dbReference type="Reactome" id="R-HSA-3371453">
    <property type="pathway name" value="Regulation of HSF1-mediated heat shock response"/>
</dbReference>
<dbReference type="Reactome" id="R-HSA-4085377">
    <property type="pathway name" value="SUMOylation of SUMOylation proteins"/>
</dbReference>
<dbReference type="Reactome" id="R-HSA-4551638">
    <property type="pathway name" value="SUMOylation of chromatin organization proteins"/>
</dbReference>
<dbReference type="Reactome" id="R-HSA-4570464">
    <property type="pathway name" value="SUMOylation of RNA binding proteins"/>
</dbReference>
<dbReference type="Reactome" id="R-HSA-4615885">
    <property type="pathway name" value="SUMOylation of DNA replication proteins"/>
</dbReference>
<dbReference type="Reactome" id="R-HSA-5578749">
    <property type="pathway name" value="Transcriptional regulation by small RNAs"/>
</dbReference>
<dbReference type="Reactome" id="R-HSA-5619107">
    <property type="pathway name" value="Defective TPR may confer susceptibility towards thyroid papillary carcinoma (TPC)"/>
</dbReference>
<dbReference type="Reactome" id="R-HSA-5663220">
    <molecule id="Q96EE3-1"/>
    <property type="pathway name" value="RHO GTPases Activate Formins"/>
</dbReference>
<dbReference type="Reactome" id="R-HSA-6784531">
    <property type="pathway name" value="tRNA processing in the nucleus"/>
</dbReference>
<dbReference type="Reactome" id="R-HSA-68877">
    <molecule id="Q96EE3-1"/>
    <property type="pathway name" value="Mitotic Prometaphase"/>
</dbReference>
<dbReference type="Reactome" id="R-HSA-9609690">
    <property type="pathway name" value="HCMV Early Events"/>
</dbReference>
<dbReference type="Reactome" id="R-HSA-9610379">
    <property type="pathway name" value="HCMV Late Events"/>
</dbReference>
<dbReference type="Reactome" id="R-HSA-9615933">
    <molecule id="Q96EE3-1"/>
    <property type="pathway name" value="Postmitotic nuclear pore complex (NPC) reformation"/>
</dbReference>
<dbReference type="Reactome" id="R-HSA-9639288">
    <property type="pathway name" value="Amino acids regulate mTORC1"/>
</dbReference>
<dbReference type="Reactome" id="R-HSA-9648025">
    <molecule id="Q96EE3-1"/>
    <property type="pathway name" value="EML4 and NUDC in mitotic spindle formation"/>
</dbReference>
<dbReference type="Reactome" id="R-HSA-9705671">
    <property type="pathway name" value="SARS-CoV-2 activates/modulates innate and adaptive immune responses"/>
</dbReference>
<dbReference type="SignaLink" id="Q96EE3"/>
<dbReference type="SIGNOR" id="Q96EE3"/>
<dbReference type="BioGRID-ORCS" id="81929">
    <property type="hits" value="742 hits in 1169 CRISPR screens"/>
</dbReference>
<dbReference type="ChiTaRS" id="SEH1L">
    <property type="organism name" value="human"/>
</dbReference>
<dbReference type="GenomeRNAi" id="81929"/>
<dbReference type="Pharos" id="Q96EE3">
    <property type="development level" value="Tbio"/>
</dbReference>
<dbReference type="PRO" id="PR:Q96EE3"/>
<dbReference type="Proteomes" id="UP000005640">
    <property type="component" value="Chromosome 18"/>
</dbReference>
<dbReference type="RNAct" id="Q96EE3">
    <property type="molecule type" value="protein"/>
</dbReference>
<dbReference type="Bgee" id="ENSG00000085415">
    <property type="expression patterns" value="Expressed in endothelial cell and 200 other cell types or tissues"/>
</dbReference>
<dbReference type="ExpressionAtlas" id="Q96EE3">
    <property type="expression patterns" value="baseline and differential"/>
</dbReference>
<dbReference type="GO" id="GO:0005829">
    <property type="term" value="C:cytosol"/>
    <property type="evidence" value="ECO:0000304"/>
    <property type="project" value="Reactome"/>
</dbReference>
<dbReference type="GO" id="GO:0061700">
    <property type="term" value="C:GATOR2 complex"/>
    <property type="evidence" value="ECO:0000314"/>
    <property type="project" value="UniProtKB"/>
</dbReference>
<dbReference type="GO" id="GO:0000776">
    <property type="term" value="C:kinetochore"/>
    <property type="evidence" value="ECO:0007669"/>
    <property type="project" value="UniProtKB-KW"/>
</dbReference>
<dbReference type="GO" id="GO:0005765">
    <property type="term" value="C:lysosomal membrane"/>
    <property type="evidence" value="ECO:0000314"/>
    <property type="project" value="UniProtKB"/>
</dbReference>
<dbReference type="GO" id="GO:0005635">
    <property type="term" value="C:nuclear envelope"/>
    <property type="evidence" value="ECO:0000314"/>
    <property type="project" value="ComplexPortal"/>
</dbReference>
<dbReference type="GO" id="GO:0005643">
    <property type="term" value="C:nuclear pore"/>
    <property type="evidence" value="ECO:0000303"/>
    <property type="project" value="ComplexPortal"/>
</dbReference>
<dbReference type="GO" id="GO:0031080">
    <property type="term" value="C:nuclear pore outer ring"/>
    <property type="evidence" value="ECO:0000314"/>
    <property type="project" value="UniProtKB"/>
</dbReference>
<dbReference type="GO" id="GO:0035859">
    <property type="term" value="C:Seh1-associated complex"/>
    <property type="evidence" value="ECO:0000318"/>
    <property type="project" value="GO_Central"/>
</dbReference>
<dbReference type="GO" id="GO:0005198">
    <property type="term" value="F:structural molecule activity"/>
    <property type="evidence" value="ECO:0007669"/>
    <property type="project" value="InterPro"/>
</dbReference>
<dbReference type="GO" id="GO:0051315">
    <property type="term" value="P:attachment of mitotic spindle microtubules to kinetochore"/>
    <property type="evidence" value="ECO:0000315"/>
    <property type="project" value="UniProtKB"/>
</dbReference>
<dbReference type="GO" id="GO:0051301">
    <property type="term" value="P:cell division"/>
    <property type="evidence" value="ECO:0007669"/>
    <property type="project" value="UniProtKB-KW"/>
</dbReference>
<dbReference type="GO" id="GO:0034198">
    <property type="term" value="P:cellular response to amino acid starvation"/>
    <property type="evidence" value="ECO:0000315"/>
    <property type="project" value="UniProtKB"/>
</dbReference>
<dbReference type="GO" id="GO:0031669">
    <property type="term" value="P:cellular response to nutrient levels"/>
    <property type="evidence" value="ECO:0000314"/>
    <property type="project" value="UniProtKB"/>
</dbReference>
<dbReference type="GO" id="GO:0050830">
    <property type="term" value="P:defense response to Gram-positive bacterium"/>
    <property type="evidence" value="ECO:0007669"/>
    <property type="project" value="Ensembl"/>
</dbReference>
<dbReference type="GO" id="GO:0007080">
    <property type="term" value="P:mitotic metaphase chromosome alignment"/>
    <property type="evidence" value="ECO:0000315"/>
    <property type="project" value="UniProtKB"/>
</dbReference>
<dbReference type="GO" id="GO:0051028">
    <property type="term" value="P:mRNA transport"/>
    <property type="evidence" value="ECO:0007669"/>
    <property type="project" value="UniProtKB-KW"/>
</dbReference>
<dbReference type="GO" id="GO:1904262">
    <property type="term" value="P:negative regulation of TORC1 signaling"/>
    <property type="evidence" value="ECO:0000303"/>
    <property type="project" value="ComplexPortal"/>
</dbReference>
<dbReference type="GO" id="GO:0006999">
    <property type="term" value="P:nuclear pore organization"/>
    <property type="evidence" value="ECO:0000315"/>
    <property type="project" value="UniProtKB"/>
</dbReference>
<dbReference type="GO" id="GO:0006913">
    <property type="term" value="P:nucleocytoplasmic transport"/>
    <property type="evidence" value="ECO:0000303"/>
    <property type="project" value="ComplexPortal"/>
</dbReference>
<dbReference type="GO" id="GO:1904263">
    <property type="term" value="P:positive regulation of TORC1 signaling"/>
    <property type="evidence" value="ECO:0000314"/>
    <property type="project" value="UniProtKB"/>
</dbReference>
<dbReference type="GO" id="GO:0015031">
    <property type="term" value="P:protein transport"/>
    <property type="evidence" value="ECO:0007669"/>
    <property type="project" value="UniProtKB-KW"/>
</dbReference>
<dbReference type="GO" id="GO:0031503">
    <property type="term" value="P:protein-containing complex localization"/>
    <property type="evidence" value="ECO:0000315"/>
    <property type="project" value="UniProtKB"/>
</dbReference>
<dbReference type="FunFam" id="2.130.10.10:FF:000063">
    <property type="entry name" value="SEH1 like nucleoporin"/>
    <property type="match status" value="1"/>
</dbReference>
<dbReference type="Gene3D" id="2.130.10.10">
    <property type="entry name" value="YVTN repeat-like/Quinoprotein amine dehydrogenase"/>
    <property type="match status" value="1"/>
</dbReference>
<dbReference type="InterPro" id="IPR020472">
    <property type="entry name" value="G-protein_beta_WD-40_rep"/>
</dbReference>
<dbReference type="InterPro" id="IPR037363">
    <property type="entry name" value="Sec13/Seh1_fam"/>
</dbReference>
<dbReference type="InterPro" id="IPR015943">
    <property type="entry name" value="WD40/YVTN_repeat-like_dom_sf"/>
</dbReference>
<dbReference type="InterPro" id="IPR036322">
    <property type="entry name" value="WD40_repeat_dom_sf"/>
</dbReference>
<dbReference type="InterPro" id="IPR001680">
    <property type="entry name" value="WD40_rpt"/>
</dbReference>
<dbReference type="PANTHER" id="PTHR11024">
    <property type="entry name" value="NUCLEAR PORE COMPLEX PROTEIN SEC13 / SEH1 FAMILY MEMBER"/>
    <property type="match status" value="1"/>
</dbReference>
<dbReference type="PANTHER" id="PTHR11024:SF3">
    <property type="entry name" value="NUCLEOPORIN SEH1"/>
    <property type="match status" value="1"/>
</dbReference>
<dbReference type="Pfam" id="PF00400">
    <property type="entry name" value="WD40"/>
    <property type="match status" value="4"/>
</dbReference>
<dbReference type="PRINTS" id="PR00320">
    <property type="entry name" value="GPROTEINBRPT"/>
</dbReference>
<dbReference type="SMART" id="SM00320">
    <property type="entry name" value="WD40"/>
    <property type="match status" value="5"/>
</dbReference>
<dbReference type="SUPFAM" id="SSF50978">
    <property type="entry name" value="WD40 repeat-like"/>
    <property type="match status" value="1"/>
</dbReference>
<dbReference type="PROSITE" id="PS50082">
    <property type="entry name" value="WD_REPEATS_2"/>
    <property type="match status" value="2"/>
</dbReference>
<dbReference type="PROSITE" id="PS50294">
    <property type="entry name" value="WD_REPEATS_REGION"/>
    <property type="match status" value="2"/>
</dbReference>
<feature type="chain" id="PRO_0000051213" description="Nucleoporin SEH1">
    <location>
        <begin position="1"/>
        <end position="360"/>
    </location>
</feature>
<feature type="repeat" description="WD 1">
    <location>
        <begin position="10"/>
        <end position="49"/>
    </location>
</feature>
<feature type="repeat" description="WD 2">
    <location>
        <begin position="55"/>
        <end position="96"/>
    </location>
</feature>
<feature type="repeat" description="WD 3">
    <location>
        <begin position="111"/>
        <end position="152"/>
    </location>
</feature>
<feature type="repeat" description="WD 4">
    <location>
        <begin position="160"/>
        <end position="210"/>
    </location>
</feature>
<feature type="repeat" description="WD 5">
    <location>
        <begin position="217"/>
        <end position="258"/>
    </location>
</feature>
<feature type="repeat" description="WD 6">
    <location>
        <begin position="276"/>
        <end position="315"/>
    </location>
</feature>
<feature type="region of interest" description="Disordered" evidence="1">
    <location>
        <begin position="324"/>
        <end position="360"/>
    </location>
</feature>
<feature type="compositionally biased region" description="Polar residues" evidence="1">
    <location>
        <begin position="324"/>
        <end position="354"/>
    </location>
</feature>
<feature type="modified residue" description="Phosphoserine" evidence="20">
    <location>
        <position position="179"/>
    </location>
</feature>
<feature type="modified residue" description="Phosphoserine" evidence="20">
    <location>
        <position position="190"/>
    </location>
</feature>
<feature type="cross-link" description="Glycyl lysine isopeptide (Lys-Gly) (interchain with G-Cter in SUMO2)" evidence="21">
    <location>
        <position position="12"/>
    </location>
</feature>
<feature type="splice variant" id="VSP_037954" description="In isoform B." evidence="15 16">
    <original>KHS</original>
    <variation>YFFTPLDSPRAGSRWSSYAQLLPPPPPPLVEHSCDADTANLQYPHPRRRYLSRPLNPLPENEGI</variation>
    <location>
        <begin position="358"/>
        <end position="360"/>
    </location>
</feature>
<feature type="sequence variant" id="VAR_053417" description="In dbSNP:rs6505776." evidence="2 14">
    <original>T</original>
    <variation>N</variation>
    <location>
        <position position="342"/>
    </location>
</feature>
<feature type="sequence conflict" description="In Ref. 4; BAB71317." evidence="17" ref="4">
    <original>S</original>
    <variation>P</variation>
    <location>
        <position position="78"/>
    </location>
</feature>
<feature type="modified residue" description="Phosphoserine" evidence="19">
    <location sequence="Q96EE3-1">
        <position position="365"/>
    </location>
</feature>
<gene>
    <name type="primary">SEH1L</name>
    <name type="synonym">SEC13L</name>
    <name type="synonym">SEH1</name>
</gene>
<evidence type="ECO:0000256" key="1">
    <source>
        <dbReference type="SAM" id="MobiDB-lite"/>
    </source>
</evidence>
<evidence type="ECO:0000269" key="2">
    <source>
    </source>
</evidence>
<evidence type="ECO:0000269" key="3">
    <source>
    </source>
</evidence>
<evidence type="ECO:0000269" key="4">
    <source>
    </source>
</evidence>
<evidence type="ECO:0000269" key="5">
    <source>
    </source>
</evidence>
<evidence type="ECO:0000269" key="6">
    <source>
    </source>
</evidence>
<evidence type="ECO:0000269" key="7">
    <source>
    </source>
</evidence>
<evidence type="ECO:0000269" key="8">
    <source>
    </source>
</evidence>
<evidence type="ECO:0000269" key="9">
    <source>
    </source>
</evidence>
<evidence type="ECO:0000269" key="10">
    <source>
    </source>
</evidence>
<evidence type="ECO:0000269" key="11">
    <source>
    </source>
</evidence>
<evidence type="ECO:0000269" key="12">
    <source>
    </source>
</evidence>
<evidence type="ECO:0000269" key="13">
    <source>
    </source>
</evidence>
<evidence type="ECO:0000269" key="14">
    <source ref="3"/>
</evidence>
<evidence type="ECO:0000303" key="15">
    <source>
    </source>
</evidence>
<evidence type="ECO:0000303" key="16">
    <source ref="1"/>
</evidence>
<evidence type="ECO:0000305" key="17"/>
<evidence type="ECO:0007744" key="18">
    <source>
        <dbReference type="PDB" id="7UHY"/>
    </source>
</evidence>
<evidence type="ECO:0007744" key="19">
    <source>
    </source>
</evidence>
<evidence type="ECO:0007744" key="20">
    <source>
    </source>
</evidence>
<evidence type="ECO:0007744" key="21">
    <source>
    </source>
</evidence>
<reference key="1">
    <citation type="submission" date="2000-04" db="EMBL/GenBank/DDBJ databases">
        <title>cDNA cloning of a human homolog of yeast SEH1 gene.</title>
        <authorList>
            <person name="Pan H."/>
            <person name="Yu Y."/>
            <person name="Shen L."/>
            <person name="Huo K.-K."/>
            <person name="Li Y.-Y."/>
        </authorList>
    </citation>
    <scope>NUCLEOTIDE SEQUENCE [MRNA] (ISOFORMS A AND B)</scope>
    <source>
        <tissue>Liver</tissue>
    </source>
</reference>
<reference key="2">
    <citation type="journal article" date="2002" name="J. Cell Biol.">
        <title>Proteomic analysis of the mammalian nuclear pore complex.</title>
        <authorList>
            <person name="Cronshaw J.M."/>
            <person name="Krutchinsky A.N."/>
            <person name="Zhang W."/>
            <person name="Chait B.T."/>
            <person name="Matunis M.J."/>
        </authorList>
    </citation>
    <scope>NUCLEOTIDE SEQUENCE [MRNA] (ISOFORM A)</scope>
</reference>
<reference key="3">
    <citation type="submission" date="2001-01" db="EMBL/GenBank/DDBJ databases">
        <title>A novel gene expressed in human adrenal gland.</title>
        <authorList>
            <person name="Li Y."/>
            <person name="Gu Y."/>
            <person name="Peng Y."/>
            <person name="Fu S."/>
            <person name="Gu J."/>
            <person name="Zhang L."/>
            <person name="Jiang C."/>
            <person name="Yu Y."/>
            <person name="Han Z."/>
            <person name="Wang Y."/>
            <person name="Chen Z."/>
            <person name="Fu G."/>
        </authorList>
    </citation>
    <scope>NUCLEOTIDE SEQUENCE [MRNA] (ISOFORM A)</scope>
    <scope>VARIANT ASN-342</scope>
    <source>
        <tissue>Adrenal gland</tissue>
    </source>
</reference>
<reference key="4">
    <citation type="journal article" date="2004" name="Nat. Genet.">
        <title>Complete sequencing and characterization of 21,243 full-length human cDNAs.</title>
        <authorList>
            <person name="Ota T."/>
            <person name="Suzuki Y."/>
            <person name="Nishikawa T."/>
            <person name="Otsuki T."/>
            <person name="Sugiyama T."/>
            <person name="Irie R."/>
            <person name="Wakamatsu A."/>
            <person name="Hayashi K."/>
            <person name="Sato H."/>
            <person name="Nagai K."/>
            <person name="Kimura K."/>
            <person name="Makita H."/>
            <person name="Sekine M."/>
            <person name="Obayashi M."/>
            <person name="Nishi T."/>
            <person name="Shibahara T."/>
            <person name="Tanaka T."/>
            <person name="Ishii S."/>
            <person name="Yamamoto J."/>
            <person name="Saito K."/>
            <person name="Kawai Y."/>
            <person name="Isono Y."/>
            <person name="Nakamura Y."/>
            <person name="Nagahari K."/>
            <person name="Murakami K."/>
            <person name="Yasuda T."/>
            <person name="Iwayanagi T."/>
            <person name="Wagatsuma M."/>
            <person name="Shiratori A."/>
            <person name="Sudo H."/>
            <person name="Hosoiri T."/>
            <person name="Kaku Y."/>
            <person name="Kodaira H."/>
            <person name="Kondo H."/>
            <person name="Sugawara M."/>
            <person name="Takahashi M."/>
            <person name="Kanda K."/>
            <person name="Yokoi T."/>
            <person name="Furuya T."/>
            <person name="Kikkawa E."/>
            <person name="Omura Y."/>
            <person name="Abe K."/>
            <person name="Kamihara K."/>
            <person name="Katsuta N."/>
            <person name="Sato K."/>
            <person name="Tanikawa M."/>
            <person name="Yamazaki M."/>
            <person name="Ninomiya K."/>
            <person name="Ishibashi T."/>
            <person name="Yamashita H."/>
            <person name="Murakawa K."/>
            <person name="Fujimori K."/>
            <person name="Tanai H."/>
            <person name="Kimata M."/>
            <person name="Watanabe M."/>
            <person name="Hiraoka S."/>
            <person name="Chiba Y."/>
            <person name="Ishida S."/>
            <person name="Ono Y."/>
            <person name="Takiguchi S."/>
            <person name="Watanabe S."/>
            <person name="Yosida M."/>
            <person name="Hotuta T."/>
            <person name="Kusano J."/>
            <person name="Kanehori K."/>
            <person name="Takahashi-Fujii A."/>
            <person name="Hara H."/>
            <person name="Tanase T.-O."/>
            <person name="Nomura Y."/>
            <person name="Togiya S."/>
            <person name="Komai F."/>
            <person name="Hara R."/>
            <person name="Takeuchi K."/>
            <person name="Arita M."/>
            <person name="Imose N."/>
            <person name="Musashino K."/>
            <person name="Yuuki H."/>
            <person name="Oshima A."/>
            <person name="Sasaki N."/>
            <person name="Aotsuka S."/>
            <person name="Yoshikawa Y."/>
            <person name="Matsunawa H."/>
            <person name="Ichihara T."/>
            <person name="Shiohata N."/>
            <person name="Sano S."/>
            <person name="Moriya S."/>
            <person name="Momiyama H."/>
            <person name="Satoh N."/>
            <person name="Takami S."/>
            <person name="Terashima Y."/>
            <person name="Suzuki O."/>
            <person name="Nakagawa S."/>
            <person name="Senoh A."/>
            <person name="Mizoguchi H."/>
            <person name="Goto Y."/>
            <person name="Shimizu F."/>
            <person name="Wakebe H."/>
            <person name="Hishigaki H."/>
            <person name="Watanabe T."/>
            <person name="Sugiyama A."/>
            <person name="Takemoto M."/>
            <person name="Kawakami B."/>
            <person name="Yamazaki M."/>
            <person name="Watanabe K."/>
            <person name="Kumagai A."/>
            <person name="Itakura S."/>
            <person name="Fukuzumi Y."/>
            <person name="Fujimori Y."/>
            <person name="Komiyama M."/>
            <person name="Tashiro H."/>
            <person name="Tanigami A."/>
            <person name="Fujiwara T."/>
            <person name="Ono T."/>
            <person name="Yamada K."/>
            <person name="Fujii Y."/>
            <person name="Ozaki K."/>
            <person name="Hirao M."/>
            <person name="Ohmori Y."/>
            <person name="Kawabata A."/>
            <person name="Hikiji T."/>
            <person name="Kobatake N."/>
            <person name="Inagaki H."/>
            <person name="Ikema Y."/>
            <person name="Okamoto S."/>
            <person name="Okitani R."/>
            <person name="Kawakami T."/>
            <person name="Noguchi S."/>
            <person name="Itoh T."/>
            <person name="Shigeta K."/>
            <person name="Senba T."/>
            <person name="Matsumura K."/>
            <person name="Nakajima Y."/>
            <person name="Mizuno T."/>
            <person name="Morinaga M."/>
            <person name="Sasaki M."/>
            <person name="Togashi T."/>
            <person name="Oyama M."/>
            <person name="Hata H."/>
            <person name="Watanabe M."/>
            <person name="Komatsu T."/>
            <person name="Mizushima-Sugano J."/>
            <person name="Satoh T."/>
            <person name="Shirai Y."/>
            <person name="Takahashi Y."/>
            <person name="Nakagawa K."/>
            <person name="Okumura K."/>
            <person name="Nagase T."/>
            <person name="Nomura N."/>
            <person name="Kikuchi H."/>
            <person name="Masuho Y."/>
            <person name="Yamashita R."/>
            <person name="Nakai K."/>
            <person name="Yada T."/>
            <person name="Nakamura Y."/>
            <person name="Ohara O."/>
            <person name="Isogai T."/>
            <person name="Sugano S."/>
        </authorList>
    </citation>
    <scope>NUCLEOTIDE SEQUENCE [LARGE SCALE MRNA] (ISOFORM B)</scope>
    <scope>VARIANT ASN-342</scope>
    <source>
        <tissue>Skeletal muscle</tissue>
    </source>
</reference>
<reference key="5">
    <citation type="journal article" date="2004" name="Genome Res.">
        <title>The status, quality, and expansion of the NIH full-length cDNA project: the Mammalian Gene Collection (MGC).</title>
        <authorList>
            <consortium name="The MGC Project Team"/>
        </authorList>
    </citation>
    <scope>NUCLEOTIDE SEQUENCE [LARGE SCALE MRNA] (ISOFORM A)</scope>
    <source>
        <tissue>Eye</tissue>
    </source>
</reference>
<reference key="6">
    <citation type="journal article" date="2004" name="Mol. Biol. Cell">
        <title>The entire Nup107-160 complex, including three new members, is targeted as one entity to kinetochores in mitosis.</title>
        <authorList>
            <person name="Loieodice I."/>
            <person name="Alves A."/>
            <person name="Rabut G."/>
            <person name="Van Overbeek M."/>
            <person name="Ellenberg J."/>
            <person name="Sibarita J.-B."/>
            <person name="Doye V."/>
        </authorList>
    </citation>
    <scope>FUNCTION</scope>
    <scope>ASSOCIATION WITH THE NUP107-160 COMPLEX</scope>
    <scope>SUBCELLULAR LOCATION</scope>
</reference>
<reference key="7">
    <citation type="journal article" date="2007" name="EMBO J.">
        <title>The human Nup107-160 nuclear pore subcomplex contributes to proper kinetochore functions.</title>
        <authorList>
            <person name="Zuccolo M."/>
            <person name="Alves A."/>
            <person name="Galy V."/>
            <person name="Bolhy S."/>
            <person name="Formstecher E."/>
            <person name="Racine V."/>
            <person name="Sibarita J.-B."/>
            <person name="Fukagawa T."/>
            <person name="Shiekhattar R."/>
            <person name="Yen T."/>
            <person name="Doye V."/>
        </authorList>
    </citation>
    <scope>FUNCTION</scope>
    <scope>SUBCELLULAR LOCATION</scope>
</reference>
<reference key="8">
    <citation type="journal article" date="2007" name="Proc. Natl. Acad. Sci. U.S.A.">
        <title>Cell-cycle-dependent phosphorylation of the nuclear pore Nup107-160 subcomplex.</title>
        <authorList>
            <person name="Glavy J.S."/>
            <person name="Krutchinsky A.N."/>
            <person name="Cristea I.M."/>
            <person name="Berke I.C."/>
            <person name="Boehmer T."/>
            <person name="Blobel G."/>
            <person name="Chait B.T."/>
        </authorList>
    </citation>
    <scope>IDENTIFICATION BY MASS SPECTROMETRY</scope>
    <scope>IDENTIFICATION IN THE NUP107-160 COMPLEX</scope>
</reference>
<reference key="9">
    <citation type="journal article" date="2008" name="Proc. Natl. Acad. Sci. U.S.A.">
        <title>A quantitative atlas of mitotic phosphorylation.</title>
        <authorList>
            <person name="Dephoure N."/>
            <person name="Zhou C."/>
            <person name="Villen J."/>
            <person name="Beausoleil S.A."/>
            <person name="Bakalarski C.E."/>
            <person name="Elledge S.J."/>
            <person name="Gygi S.P."/>
        </authorList>
    </citation>
    <scope>PHOSPHORYLATION [LARGE SCALE ANALYSIS] AT SER-365 (ISOFORM B)</scope>
    <scope>IDENTIFICATION BY MASS SPECTROMETRY [LARGE SCALE ANALYSIS]</scope>
    <source>
        <tissue>Cervix carcinoma</tissue>
    </source>
</reference>
<reference key="10">
    <citation type="journal article" date="2013" name="J. Proteome Res.">
        <title>Toward a comprehensive characterization of a human cancer cell phosphoproteome.</title>
        <authorList>
            <person name="Zhou H."/>
            <person name="Di Palma S."/>
            <person name="Preisinger C."/>
            <person name="Peng M."/>
            <person name="Polat A.N."/>
            <person name="Heck A.J."/>
            <person name="Mohammed S."/>
        </authorList>
    </citation>
    <scope>PHOSPHORYLATION [LARGE SCALE ANALYSIS] AT SER-179 AND SER-190</scope>
    <scope>IDENTIFICATION BY MASS SPECTROMETRY [LARGE SCALE ANALYSIS]</scope>
    <source>
        <tissue>Erythroleukemia</tissue>
    </source>
</reference>
<reference key="11">
    <citation type="journal article" date="2014" name="Cell Rep.">
        <title>The Sestrins interact with GATOR2 to negatively regulate the amino-acid-sensing pathway upstream of mTORC1.</title>
        <authorList>
            <person name="Chantranupong L."/>
            <person name="Wolfson R.L."/>
            <person name="Orozco J.M."/>
            <person name="Saxton R.A."/>
            <person name="Scaria S.M."/>
            <person name="Bar-Peled L."/>
            <person name="Spooner E."/>
            <person name="Isasa M."/>
            <person name="Gygi S.P."/>
            <person name="Sabatini D.M."/>
        </authorList>
    </citation>
    <scope>INTERACTION WITH SESN1; SESN2 AND SESN3</scope>
</reference>
<reference key="12">
    <citation type="journal article" date="2014" name="Cell Rep.">
        <title>Sestrins inhibit mTORC1 kinase activation through the GATOR complex.</title>
        <authorList>
            <person name="Parmigiani A."/>
            <person name="Nourbakhsh A."/>
            <person name="Ding B."/>
            <person name="Wang W."/>
            <person name="Kim Y.C."/>
            <person name="Akopiants K."/>
            <person name="Guan K.L."/>
            <person name="Karin M."/>
            <person name="Budanov A.V."/>
        </authorList>
    </citation>
    <scope>FUNCTION</scope>
    <scope>ACTIVITY REGULATION</scope>
    <scope>INTERACTION WITH SESN2</scope>
</reference>
<reference key="13">
    <citation type="journal article" date="2016" name="Cell">
        <title>The CASTOR proteins are arginine sensors for the mTORC1 pathway.</title>
        <authorList>
            <person name="Chantranupong L."/>
            <person name="Scaria S.M."/>
            <person name="Saxton R.A."/>
            <person name="Gygi M.P."/>
            <person name="Shen K."/>
            <person name="Wyant G.A."/>
            <person name="Wang T."/>
            <person name="Harper J.W."/>
            <person name="Gygi S.P."/>
            <person name="Sabatini D.M."/>
        </authorList>
    </citation>
    <scope>FUNCTION</scope>
    <scope>ACTIVITY REGULATION</scope>
    <scope>INTERACTION WITH CASTOR2 AND CASTOR1</scope>
</reference>
<reference key="14">
    <citation type="journal article" date="2013" name="Science">
        <title>A Tumor suppressor complex with GAP activity for the Rag GTPases that signal amino acid sufficiency to mTORC1.</title>
        <authorList>
            <person name="Bar-Peled L."/>
            <person name="Chantranupong L."/>
            <person name="Cherniack A.D."/>
            <person name="Chen W.W."/>
            <person name="Ottina K.A."/>
            <person name="Grabiner B.C."/>
            <person name="Spear E.D."/>
            <person name="Carter S.L."/>
            <person name="Meyerson M."/>
            <person name="Sabatini D.M."/>
        </authorList>
    </citation>
    <scope>FUNCTION</scope>
    <scope>IDENTIFICATION IN GATOR COMPLEX</scope>
    <scope>INTERACTION WITH RRAG PROTEINS</scope>
</reference>
<reference key="15">
    <citation type="journal article" date="2016" name="Nature">
        <title>Mechanism of arginine sensing by CASTOR1 upstream of mTORC1.</title>
        <authorList>
            <person name="Saxton R.A."/>
            <person name="Chantranupong L."/>
            <person name="Knockenhauer K.E."/>
            <person name="Schwartz T.U."/>
            <person name="Sabatini D.M."/>
        </authorList>
    </citation>
    <scope>FUNCTION</scope>
    <scope>ACTIVITY REGULATION</scope>
</reference>
<reference key="16">
    <citation type="journal article" date="2017" name="Nat. Struct. Mol. Biol.">
        <title>Site-specific mapping of the human SUMO proteome reveals co-modification with phosphorylation.</title>
        <authorList>
            <person name="Hendriks I.A."/>
            <person name="Lyon D."/>
            <person name="Young C."/>
            <person name="Jensen L.J."/>
            <person name="Vertegaal A.C."/>
            <person name="Nielsen M.L."/>
        </authorList>
    </citation>
    <scope>SUMOYLATION [LARGE SCALE ANALYSIS] AT LYS-12</scope>
    <scope>IDENTIFICATION BY MASS SPECTROMETRY [LARGE SCALE ANALYSIS]</scope>
</reference>
<reference key="17">
    <citation type="journal article" date="2017" name="Nature">
        <title>KICSTOR recruits GATOR1 to the lysosome and is necessary for nutrients to regulate mTORC1.</title>
        <authorList>
            <person name="Wolfson R.L."/>
            <person name="Chantranupong L."/>
            <person name="Wyant G.A."/>
            <person name="Gu X."/>
            <person name="Orozco J.M."/>
            <person name="Shen K."/>
            <person name="Condon K.J."/>
            <person name="Petri S."/>
            <person name="Kedir J."/>
            <person name="Scaria S.M."/>
            <person name="Abu-Remaileh M."/>
            <person name="Frankel W.N."/>
            <person name="Sabatini D.M."/>
        </authorList>
    </citation>
    <scope>SUBCELLULAR LOCATION</scope>
</reference>
<reference key="18">
    <citation type="journal article" date="2023" name="Mol. Cell">
        <title>Ring domains are essential for GATOR2-dependent mTORC1 activation.</title>
        <authorList>
            <person name="Jiang C."/>
            <person name="Dai X."/>
            <person name="He S."/>
            <person name="Zhou H."/>
            <person name="Fang L."/>
            <person name="Guo J."/>
            <person name="Liu S."/>
            <person name="Zhang T."/>
            <person name="Pan W."/>
            <person name="Yu H."/>
            <person name="Fu T."/>
            <person name="Li D."/>
            <person name="Inuzuka H."/>
            <person name="Wang P."/>
            <person name="Xiao J."/>
            <person name="Wei W."/>
        </authorList>
    </citation>
    <scope>FUNCTION</scope>
    <scope>IDENTIFICATION IN GATOR2 COMPLEX</scope>
</reference>
<reference evidence="18" key="19">
    <citation type="journal article" date="2022" name="Nature">
        <title>Structure of the nutrient-sensing hub GATOR2.</title>
        <authorList>
            <person name="Valenstein M.L."/>
            <person name="Rogala K.B."/>
            <person name="Lalgudi P.V."/>
            <person name="Brignole E.J."/>
            <person name="Gu X."/>
            <person name="Saxton R.A."/>
            <person name="Chantranupong L."/>
            <person name="Kolibius J."/>
            <person name="Quast J.P."/>
            <person name="Sabatini D.M."/>
        </authorList>
    </citation>
    <scope>STRUCTURE BY ELECTRON MICROSCOPY (3.66 ANGSTROMS) IN COMPLEX WITH WDR59; SEC13 AND MIOS</scope>
    <scope>FUNCTION</scope>
    <scope>ACTIVITY REGULATION</scope>
    <scope>IDENTIFICATION IN GATOR2 COMPLEX</scope>
    <scope>INTERACTION WITH SESN2</scope>
</reference>
<sequence length="360" mass="39649">MFVARSIAADHKDLIHDVSFDFHGRRMATCSSDQSVKVWDKSESGDWHCTASWKTHSGSVWRVTWAHPEFGQVLASCSFDRTAAVWEEIVGESNDKLRGQSHWVKRTTLVDSRTSVTDVKFAPKHMGLMLATCSADGIVRIYEAPDVMNLSQWSLQHEISCKLSCSCISWNPSSSRAHSPMIAVGSDDSSPNAMAKVQIFEYNENTRKYAKAETLMTVTDPVHDIAFAPNLGRSFHILAIATKDVRIFTLKPVRKELTSSGGPTKFEIHIVAQFDNHNSQVWRVSWNITGTVLASSGDDGCVRLWKANYMDNWKCTGILKGNGSPVNGSSQQGTSNPSLGSTIPSLQNSLNGSSAGRKHS</sequence>
<accession>Q96EE3</accession>
<accession>A8K5B1</accession>
<accession>Q8NFU6</accession>
<accession>Q96MH3</accession>
<accession>Q9C069</accession>
<keyword id="KW-0002">3D-structure</keyword>
<keyword id="KW-0025">Alternative splicing</keyword>
<keyword id="KW-0131">Cell cycle</keyword>
<keyword id="KW-0132">Cell division</keyword>
<keyword id="KW-0137">Centromere</keyword>
<keyword id="KW-0158">Chromosome</keyword>
<keyword id="KW-0159">Chromosome partition</keyword>
<keyword id="KW-1017">Isopeptide bond</keyword>
<keyword id="KW-0995">Kinetochore</keyword>
<keyword id="KW-0458">Lysosome</keyword>
<keyword id="KW-0472">Membrane</keyword>
<keyword id="KW-0498">Mitosis</keyword>
<keyword id="KW-0509">mRNA transport</keyword>
<keyword id="KW-0906">Nuclear pore complex</keyword>
<keyword id="KW-0539">Nucleus</keyword>
<keyword id="KW-0597">Phosphoprotein</keyword>
<keyword id="KW-0653">Protein transport</keyword>
<keyword id="KW-1267">Proteomics identification</keyword>
<keyword id="KW-1185">Reference proteome</keyword>
<keyword id="KW-0677">Repeat</keyword>
<keyword id="KW-0811">Translocation</keyword>
<keyword id="KW-0813">Transport</keyword>
<keyword id="KW-0832">Ubl conjugation</keyword>
<keyword id="KW-0853">WD repeat</keyword>
<protein>
    <recommendedName>
        <fullName evidence="17">Nucleoporin SEH1</fullName>
    </recommendedName>
    <alternativeName>
        <fullName evidence="17">GATOR2 complex protein SEH1</fullName>
    </alternativeName>
    <alternativeName>
        <fullName>Nup107-160 subcomplex subunit SEH1</fullName>
    </alternativeName>
    <alternativeName>
        <fullName>SEC13-like protein</fullName>
    </alternativeName>
</protein>